<keyword id="KW-0687">Ribonucleoprotein</keyword>
<keyword id="KW-0689">Ribosomal protein</keyword>
<keyword id="KW-0694">RNA-binding</keyword>
<keyword id="KW-0699">rRNA-binding</keyword>
<feature type="chain" id="PRO_0000258469" description="Large ribosomal subunit protein bL9">
    <location>
        <begin position="1"/>
        <end position="145"/>
    </location>
</feature>
<protein>
    <recommendedName>
        <fullName evidence="1">Large ribosomal subunit protein bL9</fullName>
    </recommendedName>
    <alternativeName>
        <fullName evidence="2">50S ribosomal protein L9</fullName>
    </alternativeName>
</protein>
<gene>
    <name evidence="1" type="primary">rplI</name>
    <name type="ordered locus">MHP7448_0645</name>
</gene>
<name>RL9_MESH7</name>
<evidence type="ECO:0000255" key="1">
    <source>
        <dbReference type="HAMAP-Rule" id="MF_00503"/>
    </source>
</evidence>
<evidence type="ECO:0000305" key="2"/>
<proteinExistence type="inferred from homology"/>
<organism>
    <name type="scientific">Mesomycoplasma hyopneumoniae (strain 7448)</name>
    <name type="common">Mycoplasma hyopneumoniae</name>
    <dbReference type="NCBI Taxonomy" id="262722"/>
    <lineage>
        <taxon>Bacteria</taxon>
        <taxon>Bacillati</taxon>
        <taxon>Mycoplasmatota</taxon>
        <taxon>Mycoplasmoidales</taxon>
        <taxon>Metamycoplasmataceae</taxon>
        <taxon>Mesomycoplasma</taxon>
    </lineage>
</organism>
<accession>Q4A782</accession>
<dbReference type="EMBL" id="AE017244">
    <property type="protein sequence ID" value="AAZ54007.1"/>
    <property type="molecule type" value="Genomic_DNA"/>
</dbReference>
<dbReference type="RefSeq" id="WP_011290421.1">
    <property type="nucleotide sequence ID" value="NC_007332.1"/>
</dbReference>
<dbReference type="SMR" id="Q4A782"/>
<dbReference type="KEGG" id="mhp:MHP7448_0645"/>
<dbReference type="HOGENOM" id="CLU_078938_3_1_14"/>
<dbReference type="Proteomes" id="UP000000553">
    <property type="component" value="Chromosome"/>
</dbReference>
<dbReference type="GO" id="GO:1990904">
    <property type="term" value="C:ribonucleoprotein complex"/>
    <property type="evidence" value="ECO:0007669"/>
    <property type="project" value="UniProtKB-KW"/>
</dbReference>
<dbReference type="GO" id="GO:0005840">
    <property type="term" value="C:ribosome"/>
    <property type="evidence" value="ECO:0007669"/>
    <property type="project" value="UniProtKB-KW"/>
</dbReference>
<dbReference type="GO" id="GO:0019843">
    <property type="term" value="F:rRNA binding"/>
    <property type="evidence" value="ECO:0007669"/>
    <property type="project" value="UniProtKB-UniRule"/>
</dbReference>
<dbReference type="GO" id="GO:0003735">
    <property type="term" value="F:structural constituent of ribosome"/>
    <property type="evidence" value="ECO:0007669"/>
    <property type="project" value="InterPro"/>
</dbReference>
<dbReference type="GO" id="GO:0006412">
    <property type="term" value="P:translation"/>
    <property type="evidence" value="ECO:0007669"/>
    <property type="project" value="UniProtKB-UniRule"/>
</dbReference>
<dbReference type="Gene3D" id="3.10.430.100">
    <property type="entry name" value="Ribosomal protein L9, C-terminal domain"/>
    <property type="match status" value="1"/>
</dbReference>
<dbReference type="Gene3D" id="3.40.5.10">
    <property type="entry name" value="Ribosomal protein L9, N-terminal domain"/>
    <property type="match status" value="1"/>
</dbReference>
<dbReference type="HAMAP" id="MF_00503">
    <property type="entry name" value="Ribosomal_bL9"/>
    <property type="match status" value="1"/>
</dbReference>
<dbReference type="InterPro" id="IPR000244">
    <property type="entry name" value="Ribosomal_bL9"/>
</dbReference>
<dbReference type="InterPro" id="IPR009027">
    <property type="entry name" value="Ribosomal_bL9/RNase_H1_N"/>
</dbReference>
<dbReference type="InterPro" id="IPR020594">
    <property type="entry name" value="Ribosomal_bL9_bac/chp"/>
</dbReference>
<dbReference type="InterPro" id="IPR020069">
    <property type="entry name" value="Ribosomal_bL9_C"/>
</dbReference>
<dbReference type="InterPro" id="IPR036791">
    <property type="entry name" value="Ribosomal_bL9_C_sf"/>
</dbReference>
<dbReference type="InterPro" id="IPR020070">
    <property type="entry name" value="Ribosomal_bL9_N"/>
</dbReference>
<dbReference type="InterPro" id="IPR036935">
    <property type="entry name" value="Ribosomal_bL9_N_sf"/>
</dbReference>
<dbReference type="NCBIfam" id="TIGR00158">
    <property type="entry name" value="L9"/>
    <property type="match status" value="1"/>
</dbReference>
<dbReference type="PANTHER" id="PTHR21368">
    <property type="entry name" value="50S RIBOSOMAL PROTEIN L9"/>
    <property type="match status" value="1"/>
</dbReference>
<dbReference type="Pfam" id="PF03948">
    <property type="entry name" value="Ribosomal_L9_C"/>
    <property type="match status" value="1"/>
</dbReference>
<dbReference type="Pfam" id="PF01281">
    <property type="entry name" value="Ribosomal_L9_N"/>
    <property type="match status" value="1"/>
</dbReference>
<dbReference type="SUPFAM" id="SSF55658">
    <property type="entry name" value="L9 N-domain-like"/>
    <property type="match status" value="1"/>
</dbReference>
<dbReference type="SUPFAM" id="SSF55653">
    <property type="entry name" value="Ribosomal protein L9 C-domain"/>
    <property type="match status" value="1"/>
</dbReference>
<dbReference type="PROSITE" id="PS00651">
    <property type="entry name" value="RIBOSOMAL_L9"/>
    <property type="match status" value="1"/>
</dbReference>
<reference key="1">
    <citation type="journal article" date="2005" name="J. Bacteriol.">
        <title>Swine and poultry pathogens: the complete genome sequences of two strains of Mycoplasma hyopneumoniae and a strain of Mycoplasma synoviae.</title>
        <authorList>
            <person name="Vasconcelos A.T.R."/>
            <person name="Ferreira H.B."/>
            <person name="Bizarro C.V."/>
            <person name="Bonatto S.L."/>
            <person name="Carvalho M.O."/>
            <person name="Pinto P.M."/>
            <person name="Almeida D.F."/>
            <person name="Almeida L.G.P."/>
            <person name="Almeida R."/>
            <person name="Alves-Junior L."/>
            <person name="Assuncao E.N."/>
            <person name="Azevedo V.A.C."/>
            <person name="Bogo M.R."/>
            <person name="Brigido M.M."/>
            <person name="Brocchi M."/>
            <person name="Burity H.A."/>
            <person name="Camargo A.A."/>
            <person name="Camargo S.S."/>
            <person name="Carepo M.S."/>
            <person name="Carraro D.M."/>
            <person name="de Mattos Cascardo J.C."/>
            <person name="Castro L.A."/>
            <person name="Cavalcanti G."/>
            <person name="Chemale G."/>
            <person name="Collevatti R.G."/>
            <person name="Cunha C.W."/>
            <person name="Dallagiovanna B."/>
            <person name="Dambros B.P."/>
            <person name="Dellagostin O.A."/>
            <person name="Falcao C."/>
            <person name="Fantinatti-Garboggini F."/>
            <person name="Felipe M.S.S."/>
            <person name="Fiorentin L."/>
            <person name="Franco G.R."/>
            <person name="Freitas N.S.A."/>
            <person name="Frias D."/>
            <person name="Grangeiro T.B."/>
            <person name="Grisard E.C."/>
            <person name="Guimaraes C.T."/>
            <person name="Hungria M."/>
            <person name="Jardim S.N."/>
            <person name="Krieger M.A."/>
            <person name="Laurino J.P."/>
            <person name="Lima L.F.A."/>
            <person name="Lopes M.I."/>
            <person name="Loreto E.L.S."/>
            <person name="Madeira H.M.F."/>
            <person name="Manfio G.P."/>
            <person name="Maranhao A.Q."/>
            <person name="Martinkovics C.T."/>
            <person name="Medeiros S.R.B."/>
            <person name="Moreira M.A.M."/>
            <person name="Neiva M."/>
            <person name="Ramalho-Neto C.E."/>
            <person name="Nicolas M.F."/>
            <person name="Oliveira S.C."/>
            <person name="Paixao R.F.C."/>
            <person name="Pedrosa F.O."/>
            <person name="Pena S.D.J."/>
            <person name="Pereira M."/>
            <person name="Pereira-Ferrari L."/>
            <person name="Piffer I."/>
            <person name="Pinto L.S."/>
            <person name="Potrich D.P."/>
            <person name="Salim A.C.M."/>
            <person name="Santos F.R."/>
            <person name="Schmitt R."/>
            <person name="Schneider M.P.C."/>
            <person name="Schrank A."/>
            <person name="Schrank I.S."/>
            <person name="Schuck A.F."/>
            <person name="Seuanez H.N."/>
            <person name="Silva D.W."/>
            <person name="Silva R."/>
            <person name="Silva S.C."/>
            <person name="Soares C.M.A."/>
            <person name="Souza K.R.L."/>
            <person name="Souza R.C."/>
            <person name="Staats C.C."/>
            <person name="Steffens M.B.R."/>
            <person name="Teixeira S.M.R."/>
            <person name="Urmenyi T.P."/>
            <person name="Vainstein M.H."/>
            <person name="Zuccherato L.W."/>
            <person name="Simpson A.J.G."/>
            <person name="Zaha A."/>
        </authorList>
    </citation>
    <scope>NUCLEOTIDE SEQUENCE [LARGE SCALE GENOMIC DNA]</scope>
    <source>
        <strain>7448</strain>
    </source>
</reference>
<sequence length="145" mass="16426">MKVILIKDTKDGKANTIIDVSPGYATNFLFKNKLAEPLNSRTEKLLVKRKQQIEIEKQEKQEQIAKLKIEIEKLVLWFKLKGNKESVHGAITAKKIKKELEIKGIFVDKQAIQTSGISTFGTSFVDIKLSSQTIAKLKINITKDE</sequence>
<comment type="function">
    <text evidence="1">Binds to the 23S rRNA.</text>
</comment>
<comment type="similarity">
    <text evidence="1">Belongs to the bacterial ribosomal protein bL9 family.</text>
</comment>